<dbReference type="EMBL" id="D64046">
    <property type="protein sequence ID" value="BAA10926.1"/>
    <property type="molecule type" value="mRNA"/>
</dbReference>
<dbReference type="SMR" id="Q63788"/>
<dbReference type="FunCoup" id="Q63788">
    <property type="interactions" value="1518"/>
</dbReference>
<dbReference type="IntAct" id="Q63788">
    <property type="interactions" value="3"/>
</dbReference>
<dbReference type="STRING" id="10116.ENSRNOP00000026210"/>
<dbReference type="iPTMnet" id="Q63788"/>
<dbReference type="PhosphoSitePlus" id="Q63788"/>
<dbReference type="PaxDb" id="10116-ENSRNOP00000026210"/>
<dbReference type="AGR" id="RGD:68341"/>
<dbReference type="RGD" id="68341">
    <property type="gene designation" value="Pik3r2"/>
</dbReference>
<dbReference type="eggNOG" id="KOG4637">
    <property type="taxonomic scope" value="Eukaryota"/>
</dbReference>
<dbReference type="InParanoid" id="Q63788"/>
<dbReference type="PhylomeDB" id="Q63788"/>
<dbReference type="Reactome" id="R-RNO-109704">
    <property type="pathway name" value="PI3K Cascade"/>
</dbReference>
<dbReference type="Reactome" id="R-RNO-112399">
    <property type="pathway name" value="IRS-mediated signalling"/>
</dbReference>
<dbReference type="Reactome" id="R-RNO-114604">
    <property type="pathway name" value="GPVI-mediated activation cascade"/>
</dbReference>
<dbReference type="Reactome" id="R-RNO-1257604">
    <property type="pathway name" value="PIP3 activates AKT signaling"/>
</dbReference>
<dbReference type="Reactome" id="R-RNO-1266695">
    <property type="pathway name" value="Interleukin-7 signaling"/>
</dbReference>
<dbReference type="Reactome" id="R-RNO-1433557">
    <property type="pathway name" value="Signaling by SCF-KIT"/>
</dbReference>
<dbReference type="Reactome" id="R-RNO-1660499">
    <property type="pathway name" value="Synthesis of PIPs at the plasma membrane"/>
</dbReference>
<dbReference type="Reactome" id="R-RNO-186763">
    <property type="pathway name" value="Downstream signal transduction"/>
</dbReference>
<dbReference type="Reactome" id="R-RNO-198203">
    <property type="pathway name" value="PI3K/AKT activation"/>
</dbReference>
<dbReference type="Reactome" id="R-RNO-201556">
    <property type="pathway name" value="Signaling by ALK"/>
</dbReference>
<dbReference type="Reactome" id="R-RNO-202424">
    <property type="pathway name" value="Downstream TCR signaling"/>
</dbReference>
<dbReference type="Reactome" id="R-RNO-2029485">
    <property type="pathway name" value="Role of phospholipids in phagocytosis"/>
</dbReference>
<dbReference type="Reactome" id="R-RNO-210993">
    <property type="pathway name" value="Tie2 Signaling"/>
</dbReference>
<dbReference type="Reactome" id="R-RNO-2424491">
    <property type="pathway name" value="DAP12 signaling"/>
</dbReference>
<dbReference type="Reactome" id="R-RNO-2730905">
    <property type="pathway name" value="Role of LAT2/NTAL/LAB on calcium mobilization"/>
</dbReference>
<dbReference type="Reactome" id="R-RNO-389357">
    <property type="pathway name" value="CD28 dependent PI3K/Akt signaling"/>
</dbReference>
<dbReference type="Reactome" id="R-RNO-416476">
    <property type="pathway name" value="G alpha (q) signalling events"/>
</dbReference>
<dbReference type="Reactome" id="R-RNO-4420097">
    <property type="pathway name" value="VEGFA-VEGFR2 Pathway"/>
</dbReference>
<dbReference type="Reactome" id="R-RNO-512988">
    <property type="pathway name" value="Interleukin-3, Interleukin-5 and GM-CSF signaling"/>
</dbReference>
<dbReference type="Reactome" id="R-RNO-5673001">
    <property type="pathway name" value="RAF/MAP kinase cascade"/>
</dbReference>
<dbReference type="Reactome" id="R-RNO-6811558">
    <property type="pathway name" value="PI5P, PP2A and IER3 Regulate PI3K/AKT Signaling"/>
</dbReference>
<dbReference type="Reactome" id="R-RNO-8853659">
    <property type="pathway name" value="RET signaling"/>
</dbReference>
<dbReference type="Reactome" id="R-RNO-8980692">
    <property type="pathway name" value="RHOA GTPase cycle"/>
</dbReference>
<dbReference type="Reactome" id="R-RNO-9009391">
    <property type="pathway name" value="Extra-nuclear estrogen signaling"/>
</dbReference>
<dbReference type="Reactome" id="R-RNO-9013026">
    <property type="pathway name" value="RHOB GTPase cycle"/>
</dbReference>
<dbReference type="Reactome" id="R-RNO-9013148">
    <property type="pathway name" value="CDC42 GTPase cycle"/>
</dbReference>
<dbReference type="Reactome" id="R-RNO-9013149">
    <property type="pathway name" value="RAC1 GTPase cycle"/>
</dbReference>
<dbReference type="Reactome" id="R-RNO-9013404">
    <property type="pathway name" value="RAC2 GTPase cycle"/>
</dbReference>
<dbReference type="Reactome" id="R-RNO-9013405">
    <property type="pathway name" value="RHOD GTPase cycle"/>
</dbReference>
<dbReference type="Reactome" id="R-RNO-9013409">
    <property type="pathway name" value="RHOJ GTPase cycle"/>
</dbReference>
<dbReference type="Reactome" id="R-RNO-9013420">
    <property type="pathway name" value="RHOU GTPase cycle"/>
</dbReference>
<dbReference type="Reactome" id="R-RNO-9035034">
    <property type="pathway name" value="RHOF GTPase cycle"/>
</dbReference>
<dbReference type="Reactome" id="R-RNO-912526">
    <property type="pathway name" value="Interleukin receptor SHC signaling"/>
</dbReference>
<dbReference type="Reactome" id="R-RNO-912631">
    <property type="pathway name" value="Regulation of signaling by CBL"/>
</dbReference>
<dbReference type="Reactome" id="R-RNO-9696264">
    <property type="pathway name" value="RND3 GTPase cycle"/>
</dbReference>
<dbReference type="Reactome" id="R-RNO-9696270">
    <property type="pathway name" value="RND2 GTPase cycle"/>
</dbReference>
<dbReference type="Reactome" id="R-RNO-9696273">
    <property type="pathway name" value="RND1 GTPase cycle"/>
</dbReference>
<dbReference type="Reactome" id="R-RNO-9842663">
    <property type="pathway name" value="Signaling by LTK"/>
</dbReference>
<dbReference type="Reactome" id="R-RNO-9927354">
    <property type="pathway name" value="Co-stimulation by ICOS"/>
</dbReference>
<dbReference type="PRO" id="PR:Q63788"/>
<dbReference type="Proteomes" id="UP000002494">
    <property type="component" value="Unplaced"/>
</dbReference>
<dbReference type="GO" id="GO:0005829">
    <property type="term" value="C:cytosol"/>
    <property type="evidence" value="ECO:0000304"/>
    <property type="project" value="Reactome"/>
</dbReference>
<dbReference type="GO" id="GO:0005925">
    <property type="term" value="C:focal adhesion"/>
    <property type="evidence" value="ECO:0000266"/>
    <property type="project" value="RGD"/>
</dbReference>
<dbReference type="GO" id="GO:0005634">
    <property type="term" value="C:nucleus"/>
    <property type="evidence" value="ECO:0000250"/>
    <property type="project" value="UniProtKB"/>
</dbReference>
<dbReference type="GO" id="GO:0005943">
    <property type="term" value="C:phosphatidylinositol 3-kinase complex, class IA"/>
    <property type="evidence" value="ECO:0000266"/>
    <property type="project" value="RGD"/>
</dbReference>
<dbReference type="GO" id="GO:0046935">
    <property type="term" value="F:1-phosphatidylinositol-3-kinase regulator activity"/>
    <property type="evidence" value="ECO:0000318"/>
    <property type="project" value="GO_Central"/>
</dbReference>
<dbReference type="GO" id="GO:0036312">
    <property type="term" value="F:phosphatidylinositol 3-kinase regulatory subunit binding"/>
    <property type="evidence" value="ECO:0000266"/>
    <property type="project" value="RGD"/>
</dbReference>
<dbReference type="GO" id="GO:0001784">
    <property type="term" value="F:phosphotyrosine residue binding"/>
    <property type="evidence" value="ECO:0000266"/>
    <property type="project" value="RGD"/>
</dbReference>
<dbReference type="GO" id="GO:0046982">
    <property type="term" value="F:protein heterodimerization activity"/>
    <property type="evidence" value="ECO:0000266"/>
    <property type="project" value="RGD"/>
</dbReference>
<dbReference type="GO" id="GO:0019903">
    <property type="term" value="F:protein phosphatase binding"/>
    <property type="evidence" value="ECO:0000266"/>
    <property type="project" value="RGD"/>
</dbReference>
<dbReference type="GO" id="GO:0030971">
    <property type="term" value="F:receptor tyrosine kinase binding"/>
    <property type="evidence" value="ECO:0000266"/>
    <property type="project" value="RGD"/>
</dbReference>
<dbReference type="GO" id="GO:0032869">
    <property type="term" value="P:cellular response to insulin stimulus"/>
    <property type="evidence" value="ECO:0000250"/>
    <property type="project" value="UniProtKB"/>
</dbReference>
<dbReference type="GO" id="GO:0008286">
    <property type="term" value="P:insulin receptor signaling pathway"/>
    <property type="evidence" value="ECO:0000266"/>
    <property type="project" value="RGD"/>
</dbReference>
<dbReference type="GO" id="GO:0001678">
    <property type="term" value="P:intracellular glucose homeostasis"/>
    <property type="evidence" value="ECO:0000250"/>
    <property type="project" value="UniProtKB"/>
</dbReference>
<dbReference type="GO" id="GO:0090051">
    <property type="term" value="P:negative regulation of cell migration involved in sprouting angiogenesis"/>
    <property type="evidence" value="ECO:0000315"/>
    <property type="project" value="BHF-UCL"/>
</dbReference>
<dbReference type="GO" id="GO:0043409">
    <property type="term" value="P:negative regulation of MAPK cascade"/>
    <property type="evidence" value="ECO:0000266"/>
    <property type="project" value="RGD"/>
</dbReference>
<dbReference type="GO" id="GO:0043491">
    <property type="term" value="P:phosphatidylinositol 3-kinase/protein kinase B signal transduction"/>
    <property type="evidence" value="ECO:0000250"/>
    <property type="project" value="UniProtKB"/>
</dbReference>
<dbReference type="GO" id="GO:0045785">
    <property type="term" value="P:positive regulation of cell adhesion"/>
    <property type="evidence" value="ECO:0000266"/>
    <property type="project" value="RGD"/>
</dbReference>
<dbReference type="GO" id="GO:0042307">
    <property type="term" value="P:positive regulation of protein import into nucleus"/>
    <property type="evidence" value="ECO:0000250"/>
    <property type="project" value="UniProtKB"/>
</dbReference>
<dbReference type="GO" id="GO:0045944">
    <property type="term" value="P:positive regulation of transcription by RNA polymerase II"/>
    <property type="evidence" value="ECO:0000250"/>
    <property type="project" value="UniProtKB"/>
</dbReference>
<dbReference type="GO" id="GO:0015031">
    <property type="term" value="P:protein transport"/>
    <property type="evidence" value="ECO:0007669"/>
    <property type="project" value="UniProtKB-KW"/>
</dbReference>
<dbReference type="GO" id="GO:0030833">
    <property type="term" value="P:regulation of actin filament polymerization"/>
    <property type="evidence" value="ECO:0000266"/>
    <property type="project" value="RGD"/>
</dbReference>
<dbReference type="GO" id="GO:0010506">
    <property type="term" value="P:regulation of autophagy"/>
    <property type="evidence" value="ECO:0000250"/>
    <property type="project" value="UniProtKB"/>
</dbReference>
<dbReference type="GO" id="GO:1903076">
    <property type="term" value="P:regulation of protein localization to plasma membrane"/>
    <property type="evidence" value="ECO:0000266"/>
    <property type="project" value="RGD"/>
</dbReference>
<dbReference type="GO" id="GO:0051492">
    <property type="term" value="P:regulation of stress fiber assembly"/>
    <property type="evidence" value="ECO:0000266"/>
    <property type="project" value="RGD"/>
</dbReference>
<dbReference type="GO" id="GO:0034976">
    <property type="term" value="P:response to endoplasmic reticulum stress"/>
    <property type="evidence" value="ECO:0000250"/>
    <property type="project" value="UniProtKB"/>
</dbReference>
<dbReference type="CDD" id="cd12926">
    <property type="entry name" value="iSH2_PIK3R2"/>
    <property type="match status" value="1"/>
</dbReference>
<dbReference type="CDD" id="cd09930">
    <property type="entry name" value="SH2_cSH2_p85_like"/>
    <property type="match status" value="1"/>
</dbReference>
<dbReference type="CDD" id="cd09942">
    <property type="entry name" value="SH2_nSH2_p85_like"/>
    <property type="match status" value="1"/>
</dbReference>
<dbReference type="CDD" id="cd11909">
    <property type="entry name" value="SH3_PI3K_p85beta"/>
    <property type="match status" value="1"/>
</dbReference>
<dbReference type="FunFam" id="3.30.505.10:FF:000006">
    <property type="entry name" value="Phosphatidylinositol 3-kinase regulatory subunit alpha"/>
    <property type="match status" value="1"/>
</dbReference>
<dbReference type="FunFam" id="3.30.505.10:FF:000014">
    <property type="entry name" value="Phosphatidylinositol 3-kinase regulatory subunit alpha"/>
    <property type="match status" value="1"/>
</dbReference>
<dbReference type="FunFam" id="2.30.30.40:FF:000075">
    <property type="entry name" value="phosphatidylinositol 3-kinase regulatory subunit alpha"/>
    <property type="match status" value="1"/>
</dbReference>
<dbReference type="FunFam" id="1.10.555.10:FF:000037">
    <property type="entry name" value="Phosphatidylinositol 3-kinase regulatory subunit beta"/>
    <property type="match status" value="1"/>
</dbReference>
<dbReference type="FunFam" id="1.10.287.1490:FF:000001">
    <property type="entry name" value="Putative phosphatidylinositol 3-kinase regulatory subunit alpha"/>
    <property type="match status" value="1"/>
</dbReference>
<dbReference type="Gene3D" id="1.10.287.1490">
    <property type="match status" value="1"/>
</dbReference>
<dbReference type="Gene3D" id="1.10.555.10">
    <property type="entry name" value="Rho GTPase activation protein"/>
    <property type="match status" value="1"/>
</dbReference>
<dbReference type="Gene3D" id="3.30.505.10">
    <property type="entry name" value="SH2 domain"/>
    <property type="match status" value="2"/>
</dbReference>
<dbReference type="Gene3D" id="2.30.30.40">
    <property type="entry name" value="SH3 Domains"/>
    <property type="match status" value="1"/>
</dbReference>
<dbReference type="InterPro" id="IPR032498">
    <property type="entry name" value="PI3K_P85_iSH2"/>
</dbReference>
<dbReference type="InterPro" id="IPR035586">
    <property type="entry name" value="PI3K_p85beta_SH3"/>
</dbReference>
<dbReference type="InterPro" id="IPR035020">
    <property type="entry name" value="PI3kinase_P85_cSH2"/>
</dbReference>
<dbReference type="InterPro" id="IPR035022">
    <property type="entry name" value="PI3kinase_P85_nSH2"/>
</dbReference>
<dbReference type="InterPro" id="IPR008936">
    <property type="entry name" value="Rho_GTPase_activation_prot"/>
</dbReference>
<dbReference type="InterPro" id="IPR000198">
    <property type="entry name" value="RhoGAP_dom"/>
</dbReference>
<dbReference type="InterPro" id="IPR000980">
    <property type="entry name" value="SH2"/>
</dbReference>
<dbReference type="InterPro" id="IPR036860">
    <property type="entry name" value="SH2_dom_sf"/>
</dbReference>
<dbReference type="InterPro" id="IPR036028">
    <property type="entry name" value="SH3-like_dom_sf"/>
</dbReference>
<dbReference type="InterPro" id="IPR001452">
    <property type="entry name" value="SH3_domain"/>
</dbReference>
<dbReference type="PANTHER" id="PTHR10155">
    <property type="entry name" value="PHOSPHATIDYLINOSITOL 3-KINASE REGULATORY SUBUNIT"/>
    <property type="match status" value="1"/>
</dbReference>
<dbReference type="PANTHER" id="PTHR10155:SF1">
    <property type="entry name" value="PHOSPHATIDYLINOSITOL 3-KINASE REGULATORY SUBUNIT BETA"/>
    <property type="match status" value="1"/>
</dbReference>
<dbReference type="Pfam" id="PF16454">
    <property type="entry name" value="PI3K_P85_iSH2"/>
    <property type="match status" value="1"/>
</dbReference>
<dbReference type="Pfam" id="PF00620">
    <property type="entry name" value="RhoGAP"/>
    <property type="match status" value="1"/>
</dbReference>
<dbReference type="Pfam" id="PF00017">
    <property type="entry name" value="SH2"/>
    <property type="match status" value="2"/>
</dbReference>
<dbReference type="PRINTS" id="PR00678">
    <property type="entry name" value="PI3KINASEP85"/>
</dbReference>
<dbReference type="PRINTS" id="PR00401">
    <property type="entry name" value="SH2DOMAIN"/>
</dbReference>
<dbReference type="SMART" id="SM00324">
    <property type="entry name" value="RhoGAP"/>
    <property type="match status" value="1"/>
</dbReference>
<dbReference type="SMART" id="SM00252">
    <property type="entry name" value="SH2"/>
    <property type="match status" value="2"/>
</dbReference>
<dbReference type="SMART" id="SM00326">
    <property type="entry name" value="SH3"/>
    <property type="match status" value="1"/>
</dbReference>
<dbReference type="SUPFAM" id="SSF48350">
    <property type="entry name" value="GTPase activation domain, GAP"/>
    <property type="match status" value="1"/>
</dbReference>
<dbReference type="SUPFAM" id="SSF55550">
    <property type="entry name" value="SH2 domain"/>
    <property type="match status" value="2"/>
</dbReference>
<dbReference type="SUPFAM" id="SSF50044">
    <property type="entry name" value="SH3-domain"/>
    <property type="match status" value="1"/>
</dbReference>
<dbReference type="PROSITE" id="PS50238">
    <property type="entry name" value="RHOGAP"/>
    <property type="match status" value="1"/>
</dbReference>
<dbReference type="PROSITE" id="PS50001">
    <property type="entry name" value="SH2"/>
    <property type="match status" value="2"/>
</dbReference>
<dbReference type="PROSITE" id="PS50002">
    <property type="entry name" value="SH3"/>
    <property type="match status" value="1"/>
</dbReference>
<name>P85B_RAT</name>
<proteinExistence type="evidence at transcript level"/>
<organism>
    <name type="scientific">Rattus norvegicus</name>
    <name type="common">Rat</name>
    <dbReference type="NCBI Taxonomy" id="10116"/>
    <lineage>
        <taxon>Eukaryota</taxon>
        <taxon>Metazoa</taxon>
        <taxon>Chordata</taxon>
        <taxon>Craniata</taxon>
        <taxon>Vertebrata</taxon>
        <taxon>Euteleostomi</taxon>
        <taxon>Mammalia</taxon>
        <taxon>Eutheria</taxon>
        <taxon>Euarchontoglires</taxon>
        <taxon>Glires</taxon>
        <taxon>Rodentia</taxon>
        <taxon>Myomorpha</taxon>
        <taxon>Muroidea</taxon>
        <taxon>Muridae</taxon>
        <taxon>Murinae</taxon>
        <taxon>Rattus</taxon>
    </lineage>
</organism>
<comment type="function">
    <text evidence="1 2">Regulatory subunit of phosphoinositide-3-kinase (PI3K), a kinase that phosphorylates PtdIns(4,5)P2 (Phosphatidylinositol 4,5-bisphosphate) to generate phosphatidylinositol 3,4,5-trisphosphate (PIP3). PIP3 plays a key role by recruiting PH domain-containing proteins to the membrane, including AKT1 and PDPK1, activating signaling cascades involved in cell growth, survival, proliferation, motility and morphology. Binds to activated (phosphorylated) protein-tyrosine kinases, through its SH2 domain, and acts as an adapter, mediating the association of the p110 catalytic unit to the plasma membrane. Indirectly regulates autophagy. Promotes nuclear translocation of XBP1 in a ER stress- and/or insulin-dependent manner during metabolic overloading in the liver and hence plays a role in glucose tolerance improvement (By similarity).</text>
</comment>
<comment type="subunit">
    <text evidence="1 2">Heterodimer of a regulatory subunit PIK3R2 and a p110 catalytic subunit (PIK3CA, PIK3CB or PIK3CD). Interacts with AXL. Interacts with FLT1 (tyrosine-phosphorylated) and FLT4 (tyrosine-phosphorylated). Interacts with NYAP1, NYAP2 and MYO16. Interacts with FBXL2; PIK3R2 is a substrate of the SCF(FBXL2) complex. Interacts with PTPN13; dephosphorylates PIK3R2. Interacts with XBP1; the interaction is direct and induces translocation of XBP1 into the nucleus in a ER stress- and/or insulin-dependent but PI3K-independent manner. Interacts with PIK3R1; the interaction is dissociated in an insulin-dependent manner (By similarity). Interacts with SRC (By similarity).</text>
</comment>
<comment type="domain">
    <text evidence="1">The SH2 2 domain is required for interaction with FBXL2 and PTPN13.</text>
</comment>
<comment type="PTM">
    <text evidence="1">Phosphorylated in response to signaling from activated receptor-type protein kinases. Dephosphorylated by PTPRJ. Dephosphorylated at Tyr-649 by PTPN13. Phosphorylation of Tyr-649 impairs while its dephosphorylation promotes interaction with FBXL2 and SCF(FBXL2)-mediated polyubiquitination.</text>
</comment>
<comment type="PTM">
    <text evidence="1">Ubiquitinated. Polyubiquitination by the SCF(FBXL2) complex probably promotes proteasomal degradation of PIK3R2.</text>
</comment>
<comment type="similarity">
    <text evidence="7">Belongs to the PI3K p85 subunit family.</text>
</comment>
<gene>
    <name type="primary">Pik3r2</name>
</gene>
<sequence length="722" mass="81329">MAGAEGFQYRAVYPFRRERPEDLELLPGDLLVVSRVALQALGVADGGERCPHNVGWMPGFNERTRQRGDFPGTYVEFLGPVALARPGPRPRGPRPLPARPLDGPSESGHTLASLAEQFSPPESAPPILVKLIEAIEQAELDSEFYSRPELPAPRTDWSLSDLEQWDRTTLYDAVKGFLLALPAAVVTPEAASEAYRAMREVTGPVGLVLEPPTLPLHQALTLRFLLQHLGRVARRAPSPATAVHALASAFGPLLLRAPPPGGEGDGSEPAPDFPVLLLERLVQEHVDEQDTAPPALPPKPSKVKPAPTALANGGSTPSLQDAEWYWGDISREEVNERLRDTPDGTFLVRDASSKIQGEYTLTLRKGGNNKLIKVFHRDGHYGFSEPLTFCSVVELISHYRHESLAQYNAKLDTRLLYPVSKYQQDQVVKEDSVEAVGAQLKVYHQQYQDKSREYDQLYEEYTRTSQELQMKRTAIEAFNETILIFEEQGQTQEKCSKEYLERFRREGNEKEMQRILLNSERLKSRIAEIHESRTKLEQDLRAQASDNREIDKRMNSLKPDLMQLRKIRDQYLVWLTQKGARQRKINEWLGIKNETEDQYSLMEDEDALPHHEERTWYVGKINRTQAEEMLSAKRDGTFLIRESSQRGCYACSVVVDGDTKHCVIYRTATGFGFAEPYNLYGSLKELVLHYQHASLVQHNDALTVTLAHPVRAPGPGPPPAAR</sequence>
<protein>
    <recommendedName>
        <fullName>Phosphatidylinositol 3-kinase regulatory subunit beta</fullName>
        <shortName>PI3-kinase regulatory subunit beta</shortName>
        <shortName>PI3K regulatory subunit beta</shortName>
        <shortName>PtdIns-3-kinase regulatory subunit beta</shortName>
    </recommendedName>
    <alternativeName>
        <fullName>Phosphatidylinositol 3-kinase 85 kDa regulatory subunit beta</fullName>
        <shortName>PI3-kinase subunit p85-beta</shortName>
        <shortName>PtdIns-3-kinase regulatory subunit p85-beta</shortName>
    </alternativeName>
</protein>
<feature type="chain" id="PRO_0000080765" description="Phosphatidylinositol 3-kinase regulatory subunit beta">
    <location>
        <begin position="1"/>
        <end position="722"/>
    </location>
</feature>
<feature type="domain" description="SH3" evidence="5">
    <location>
        <begin position="4"/>
        <end position="80"/>
    </location>
</feature>
<feature type="domain" description="Rho-GAP" evidence="3">
    <location>
        <begin position="112"/>
        <end position="289"/>
    </location>
</feature>
<feature type="domain" description="SH2 1" evidence="4">
    <location>
        <begin position="324"/>
        <end position="419"/>
    </location>
</feature>
<feature type="domain" description="SH2 2" evidence="4">
    <location>
        <begin position="616"/>
        <end position="710"/>
    </location>
</feature>
<feature type="region of interest" description="Disordered" evidence="6">
    <location>
        <begin position="83"/>
        <end position="109"/>
    </location>
</feature>
<feature type="region of interest" description="Disordered" evidence="6">
    <location>
        <begin position="287"/>
        <end position="319"/>
    </location>
</feature>
<feature type="compositionally biased region" description="Pro residues" evidence="6">
    <location>
        <begin position="87"/>
        <end position="98"/>
    </location>
</feature>
<feature type="site" description="Arginine finger; crucial for GTP hydrolysis by stabilizing the transition state" evidence="3">
    <location>
        <position position="147"/>
    </location>
</feature>
<feature type="modified residue" description="Phosphotyrosine" evidence="1">
    <location>
        <position position="458"/>
    </location>
</feature>
<feature type="modified residue" description="Phosphotyrosine" evidence="1">
    <location>
        <position position="599"/>
    </location>
</feature>
<feature type="modified residue" description="Phosphotyrosine" evidence="1">
    <location>
        <position position="649"/>
    </location>
</feature>
<evidence type="ECO:0000250" key="1">
    <source>
        <dbReference type="UniProtKB" id="O00459"/>
    </source>
</evidence>
<evidence type="ECO:0000250" key="2">
    <source>
        <dbReference type="UniProtKB" id="O08908"/>
    </source>
</evidence>
<evidence type="ECO:0000255" key="3">
    <source>
        <dbReference type="PROSITE-ProRule" id="PRU00172"/>
    </source>
</evidence>
<evidence type="ECO:0000255" key="4">
    <source>
        <dbReference type="PROSITE-ProRule" id="PRU00191"/>
    </source>
</evidence>
<evidence type="ECO:0000255" key="5">
    <source>
        <dbReference type="PROSITE-ProRule" id="PRU00192"/>
    </source>
</evidence>
<evidence type="ECO:0000256" key="6">
    <source>
        <dbReference type="SAM" id="MobiDB-lite"/>
    </source>
</evidence>
<evidence type="ECO:0000305" key="7"/>
<reference key="1">
    <citation type="journal article" date="1996" name="J. Biol. Chem.">
        <title>A novel 55-kDa regulatory subunit for phosphatidylinositol 3-kinase structurally similar to p55PIK is generated by alternative splicing of the p85alpha gene.</title>
        <authorList>
            <person name="Inukai K."/>
            <person name="Anai M."/>
            <person name="van Breda E."/>
            <person name="Hosaka T."/>
            <person name="Katagiri H."/>
            <person name="Funaki M."/>
            <person name="Fukushima Y."/>
            <person name="Ogihara T."/>
            <person name="Yazaki Y."/>
            <person name="Kikuchi M."/>
            <person name="Oka Y."/>
            <person name="Asano T."/>
        </authorList>
    </citation>
    <scope>NUCLEOTIDE SEQUENCE [MRNA]</scope>
    <source>
        <strain>Wistar</strain>
        <tissue>Brain</tissue>
    </source>
</reference>
<accession>Q63788</accession>
<keyword id="KW-0343">GTPase activation</keyword>
<keyword id="KW-0597">Phosphoprotein</keyword>
<keyword id="KW-0653">Protein transport</keyword>
<keyword id="KW-1185">Reference proteome</keyword>
<keyword id="KW-0677">Repeat</keyword>
<keyword id="KW-0727">SH2 domain</keyword>
<keyword id="KW-0728">SH3 domain</keyword>
<keyword id="KW-0346">Stress response</keyword>
<keyword id="KW-0813">Transport</keyword>
<keyword id="KW-0832">Ubl conjugation</keyword>